<name>HLDD_BURA4</name>
<evidence type="ECO:0000255" key="1">
    <source>
        <dbReference type="HAMAP-Rule" id="MF_01601"/>
    </source>
</evidence>
<keyword id="KW-0119">Carbohydrate metabolism</keyword>
<keyword id="KW-0413">Isomerase</keyword>
<keyword id="KW-0521">NADP</keyword>
<proteinExistence type="inferred from homology"/>
<gene>
    <name evidence="1" type="primary">hldD</name>
    <name type="ordered locus">BamMC406_0933</name>
</gene>
<reference key="1">
    <citation type="submission" date="2008-04" db="EMBL/GenBank/DDBJ databases">
        <title>Complete sequence of chromosome 1 of Burkholderia ambifaria MC40-6.</title>
        <authorList>
            <person name="Copeland A."/>
            <person name="Lucas S."/>
            <person name="Lapidus A."/>
            <person name="Glavina del Rio T."/>
            <person name="Dalin E."/>
            <person name="Tice H."/>
            <person name="Pitluck S."/>
            <person name="Chain P."/>
            <person name="Malfatti S."/>
            <person name="Shin M."/>
            <person name="Vergez L."/>
            <person name="Lang D."/>
            <person name="Schmutz J."/>
            <person name="Larimer F."/>
            <person name="Land M."/>
            <person name="Hauser L."/>
            <person name="Kyrpides N."/>
            <person name="Lykidis A."/>
            <person name="Ramette A."/>
            <person name="Konstantinidis K."/>
            <person name="Tiedje J."/>
            <person name="Richardson P."/>
        </authorList>
    </citation>
    <scope>NUCLEOTIDE SEQUENCE [LARGE SCALE GENOMIC DNA]</scope>
    <source>
        <strain>MC40-6</strain>
    </source>
</reference>
<accession>B1YV41</accession>
<dbReference type="EC" id="5.1.3.20" evidence="1"/>
<dbReference type="EMBL" id="CP001025">
    <property type="protein sequence ID" value="ACB63424.1"/>
    <property type="molecule type" value="Genomic_DNA"/>
</dbReference>
<dbReference type="SMR" id="B1YV41"/>
<dbReference type="KEGG" id="bac:BamMC406_0933"/>
<dbReference type="HOGENOM" id="CLU_007383_1_3_4"/>
<dbReference type="OrthoDB" id="9803010at2"/>
<dbReference type="UniPathway" id="UPA00356">
    <property type="reaction ID" value="UER00440"/>
</dbReference>
<dbReference type="Proteomes" id="UP000001680">
    <property type="component" value="Chromosome 1"/>
</dbReference>
<dbReference type="GO" id="GO:0008712">
    <property type="term" value="F:ADP-glyceromanno-heptose 6-epimerase activity"/>
    <property type="evidence" value="ECO:0007669"/>
    <property type="project" value="UniProtKB-UniRule"/>
</dbReference>
<dbReference type="GO" id="GO:0050661">
    <property type="term" value="F:NADP binding"/>
    <property type="evidence" value="ECO:0007669"/>
    <property type="project" value="InterPro"/>
</dbReference>
<dbReference type="GO" id="GO:0097171">
    <property type="term" value="P:ADP-L-glycero-beta-D-manno-heptose biosynthetic process"/>
    <property type="evidence" value="ECO:0007669"/>
    <property type="project" value="UniProtKB-UniPathway"/>
</dbReference>
<dbReference type="GO" id="GO:0005975">
    <property type="term" value="P:carbohydrate metabolic process"/>
    <property type="evidence" value="ECO:0007669"/>
    <property type="project" value="UniProtKB-UniRule"/>
</dbReference>
<dbReference type="CDD" id="cd05248">
    <property type="entry name" value="ADP_GME_SDR_e"/>
    <property type="match status" value="1"/>
</dbReference>
<dbReference type="Gene3D" id="3.40.50.720">
    <property type="entry name" value="NAD(P)-binding Rossmann-like Domain"/>
    <property type="match status" value="1"/>
</dbReference>
<dbReference type="Gene3D" id="3.90.25.10">
    <property type="entry name" value="UDP-galactose 4-epimerase, domain 1"/>
    <property type="match status" value="1"/>
</dbReference>
<dbReference type="HAMAP" id="MF_01601">
    <property type="entry name" value="Heptose_epimerase"/>
    <property type="match status" value="1"/>
</dbReference>
<dbReference type="InterPro" id="IPR001509">
    <property type="entry name" value="Epimerase_deHydtase"/>
</dbReference>
<dbReference type="InterPro" id="IPR011912">
    <property type="entry name" value="Heptose_epim"/>
</dbReference>
<dbReference type="InterPro" id="IPR036291">
    <property type="entry name" value="NAD(P)-bd_dom_sf"/>
</dbReference>
<dbReference type="NCBIfam" id="TIGR02197">
    <property type="entry name" value="heptose_epim"/>
    <property type="match status" value="1"/>
</dbReference>
<dbReference type="PANTHER" id="PTHR43103:SF3">
    <property type="entry name" value="ADP-L-GLYCERO-D-MANNO-HEPTOSE-6-EPIMERASE"/>
    <property type="match status" value="1"/>
</dbReference>
<dbReference type="PANTHER" id="PTHR43103">
    <property type="entry name" value="NUCLEOSIDE-DIPHOSPHATE-SUGAR EPIMERASE"/>
    <property type="match status" value="1"/>
</dbReference>
<dbReference type="Pfam" id="PF01370">
    <property type="entry name" value="Epimerase"/>
    <property type="match status" value="1"/>
</dbReference>
<dbReference type="SUPFAM" id="SSF51735">
    <property type="entry name" value="NAD(P)-binding Rossmann-fold domains"/>
    <property type="match status" value="1"/>
</dbReference>
<feature type="chain" id="PRO_1000190395" description="ADP-L-glycero-D-manno-heptose-6-epimerase">
    <location>
        <begin position="1"/>
        <end position="330"/>
    </location>
</feature>
<feature type="active site" description="Proton acceptor" evidence="1">
    <location>
        <position position="139"/>
    </location>
</feature>
<feature type="active site" description="Proton acceptor" evidence="1">
    <location>
        <position position="177"/>
    </location>
</feature>
<feature type="binding site" evidence="1">
    <location>
        <begin position="11"/>
        <end position="12"/>
    </location>
    <ligand>
        <name>NADP(+)</name>
        <dbReference type="ChEBI" id="CHEBI:58349"/>
    </ligand>
</feature>
<feature type="binding site" evidence="1">
    <location>
        <begin position="32"/>
        <end position="33"/>
    </location>
    <ligand>
        <name>NADP(+)</name>
        <dbReference type="ChEBI" id="CHEBI:58349"/>
    </ligand>
</feature>
<feature type="binding site" evidence="1">
    <location>
        <position position="39"/>
    </location>
    <ligand>
        <name>NADP(+)</name>
        <dbReference type="ChEBI" id="CHEBI:58349"/>
    </ligand>
</feature>
<feature type="binding site" evidence="1">
    <location>
        <position position="54"/>
    </location>
    <ligand>
        <name>NADP(+)</name>
        <dbReference type="ChEBI" id="CHEBI:58349"/>
    </ligand>
</feature>
<feature type="binding site" evidence="1">
    <location>
        <begin position="75"/>
        <end position="79"/>
    </location>
    <ligand>
        <name>NADP(+)</name>
        <dbReference type="ChEBI" id="CHEBI:58349"/>
    </ligand>
</feature>
<feature type="binding site" evidence="1">
    <location>
        <position position="92"/>
    </location>
    <ligand>
        <name>NADP(+)</name>
        <dbReference type="ChEBI" id="CHEBI:58349"/>
    </ligand>
</feature>
<feature type="binding site" evidence="1">
    <location>
        <position position="143"/>
    </location>
    <ligand>
        <name>NADP(+)</name>
        <dbReference type="ChEBI" id="CHEBI:58349"/>
    </ligand>
</feature>
<feature type="binding site" evidence="1">
    <location>
        <position position="168"/>
    </location>
    <ligand>
        <name>substrate</name>
    </ligand>
</feature>
<feature type="binding site" evidence="1">
    <location>
        <position position="169"/>
    </location>
    <ligand>
        <name>NADP(+)</name>
        <dbReference type="ChEBI" id="CHEBI:58349"/>
    </ligand>
</feature>
<feature type="binding site" evidence="1">
    <location>
        <position position="177"/>
    </location>
    <ligand>
        <name>NADP(+)</name>
        <dbReference type="ChEBI" id="CHEBI:58349"/>
    </ligand>
</feature>
<feature type="binding site" evidence="1">
    <location>
        <position position="179"/>
    </location>
    <ligand>
        <name>substrate</name>
    </ligand>
</feature>
<feature type="binding site" evidence="1">
    <location>
        <position position="186"/>
    </location>
    <ligand>
        <name>substrate</name>
    </ligand>
</feature>
<feature type="binding site" evidence="1">
    <location>
        <begin position="200"/>
        <end position="203"/>
    </location>
    <ligand>
        <name>substrate</name>
    </ligand>
</feature>
<feature type="binding site" evidence="1">
    <location>
        <position position="213"/>
    </location>
    <ligand>
        <name>substrate</name>
    </ligand>
</feature>
<feature type="binding site" evidence="1">
    <location>
        <position position="292"/>
    </location>
    <ligand>
        <name>substrate</name>
    </ligand>
</feature>
<protein>
    <recommendedName>
        <fullName evidence="1">ADP-L-glycero-D-manno-heptose-6-epimerase</fullName>
        <ecNumber evidence="1">5.1.3.20</ecNumber>
    </recommendedName>
    <alternativeName>
        <fullName evidence="1">ADP-L-glycero-beta-D-manno-heptose-6-epimerase</fullName>
        <shortName evidence="1">ADP-glyceromanno-heptose 6-epimerase</shortName>
        <shortName evidence="1">ADP-hep 6-epimerase</shortName>
        <shortName evidence="1">AGME</shortName>
    </alternativeName>
</protein>
<sequence>MTVIVTGAAGFIGANIVKALNERGESRIIAVDNLTRADKFRNLVDCEIDDYLDKTEFVERFTRGDFGKVRAVFHEGACSDTMETDGRYMMDNNFRYSRAVLDACLAQGAQFLYASSAAIYGGSTRFVEEREVEAPLNVYGYSKFLFDQVIRRVLPSAKSQIAGFRYFNVYGPRETHKGRMASVAFHNFNQFRAEGKVKLFGEYNGYAPGEQTRDFVSVEDVAKVNLFFFDHPEKSGIFNLGTGRAQPFNDIASTVVNTLRALDNLPPLTLAQQVEQGLIEYVAFPDALRGKYQCFTQADQTKLRGAGYDAPFLTVQEGVDRYVRWLSGQV</sequence>
<comment type="function">
    <text evidence="1">Catalyzes the interconversion between ADP-D-glycero-beta-D-manno-heptose and ADP-L-glycero-beta-D-manno-heptose via an epimerization at carbon 6 of the heptose.</text>
</comment>
<comment type="catalytic activity">
    <reaction evidence="1">
        <text>ADP-D-glycero-beta-D-manno-heptose = ADP-L-glycero-beta-D-manno-heptose</text>
        <dbReference type="Rhea" id="RHEA:17577"/>
        <dbReference type="ChEBI" id="CHEBI:59967"/>
        <dbReference type="ChEBI" id="CHEBI:61506"/>
        <dbReference type="EC" id="5.1.3.20"/>
    </reaction>
</comment>
<comment type="cofactor">
    <cofactor evidence="1">
        <name>NADP(+)</name>
        <dbReference type="ChEBI" id="CHEBI:58349"/>
    </cofactor>
    <text evidence="1">Binds 1 NADP(+) per subunit.</text>
</comment>
<comment type="pathway">
    <text evidence="1">Nucleotide-sugar biosynthesis; ADP-L-glycero-beta-D-manno-heptose biosynthesis; ADP-L-glycero-beta-D-manno-heptose from D-glycero-beta-D-manno-heptose 7-phosphate: step 4/4.</text>
</comment>
<comment type="subunit">
    <text evidence="1">Homopentamer.</text>
</comment>
<comment type="domain">
    <text evidence="1">Contains a large N-terminal NADP-binding domain, and a smaller C-terminal substrate-binding domain.</text>
</comment>
<comment type="similarity">
    <text evidence="1">Belongs to the NAD(P)-dependent epimerase/dehydratase family. HldD subfamily.</text>
</comment>
<organism>
    <name type="scientific">Burkholderia ambifaria (strain MC40-6)</name>
    <dbReference type="NCBI Taxonomy" id="398577"/>
    <lineage>
        <taxon>Bacteria</taxon>
        <taxon>Pseudomonadati</taxon>
        <taxon>Pseudomonadota</taxon>
        <taxon>Betaproteobacteria</taxon>
        <taxon>Burkholderiales</taxon>
        <taxon>Burkholderiaceae</taxon>
        <taxon>Burkholderia</taxon>
        <taxon>Burkholderia cepacia complex</taxon>
    </lineage>
</organism>